<organism>
    <name type="scientific">Mus musculus</name>
    <name type="common">Mouse</name>
    <dbReference type="NCBI Taxonomy" id="10090"/>
    <lineage>
        <taxon>Eukaryota</taxon>
        <taxon>Metazoa</taxon>
        <taxon>Chordata</taxon>
        <taxon>Craniata</taxon>
        <taxon>Vertebrata</taxon>
        <taxon>Euteleostomi</taxon>
        <taxon>Mammalia</taxon>
        <taxon>Eutheria</taxon>
        <taxon>Euarchontoglires</taxon>
        <taxon>Glires</taxon>
        <taxon>Rodentia</taxon>
        <taxon>Myomorpha</taxon>
        <taxon>Muroidea</taxon>
        <taxon>Muridae</taxon>
        <taxon>Murinae</taxon>
        <taxon>Mus</taxon>
        <taxon>Mus</taxon>
    </lineage>
</organism>
<protein>
    <recommendedName>
        <fullName>Clathrin interactor 1</fullName>
    </recommendedName>
    <alternativeName>
        <fullName>Enthoprotin</fullName>
    </alternativeName>
    <alternativeName>
        <fullName>Epsin-4</fullName>
    </alternativeName>
    <alternativeName>
        <fullName>Epsin-related protein</fullName>
        <shortName>EpsinR</shortName>
    </alternativeName>
</protein>
<accession>Q99KN9</accession>
<accession>Q8CFH4</accession>
<dbReference type="EMBL" id="AB093212">
    <property type="protein sequence ID" value="BAC41396.1"/>
    <property type="status" value="ALT_INIT"/>
    <property type="molecule type" value="mRNA"/>
</dbReference>
<dbReference type="EMBL" id="BC004080">
    <property type="protein sequence ID" value="AAH04080.1"/>
    <property type="molecule type" value="mRNA"/>
</dbReference>
<dbReference type="SMR" id="Q99KN9"/>
<dbReference type="FunCoup" id="Q99KN9">
    <property type="interactions" value="2409"/>
</dbReference>
<dbReference type="STRING" id="10090.ENSMUSP00000104884"/>
<dbReference type="GlyGen" id="Q99KN9">
    <property type="glycosylation" value="8 sites, 1 N-linked glycan (1 site), 1 O-linked glycan (7 sites)"/>
</dbReference>
<dbReference type="iPTMnet" id="Q99KN9"/>
<dbReference type="PhosphoSitePlus" id="Q99KN9"/>
<dbReference type="SwissPalm" id="Q99KN9"/>
<dbReference type="jPOST" id="Q99KN9"/>
<dbReference type="PaxDb" id="10090-ENSMUSP00000104883"/>
<dbReference type="PeptideAtlas" id="Q99KN9"/>
<dbReference type="ProteomicsDB" id="275637">
    <molecule id="Q99KN9-1"/>
</dbReference>
<dbReference type="ProteomicsDB" id="275638">
    <molecule id="Q99KN9-2"/>
</dbReference>
<dbReference type="Pumba" id="Q99KN9"/>
<dbReference type="UCSC" id="uc007inr.1">
    <molecule id="Q99KN9-2"/>
    <property type="organism name" value="mouse"/>
</dbReference>
<dbReference type="AGR" id="MGI:2144243"/>
<dbReference type="MGI" id="MGI:2144243">
    <property type="gene designation" value="Clint1"/>
</dbReference>
<dbReference type="eggNOG" id="KOG2057">
    <property type="taxonomic scope" value="Eukaryota"/>
</dbReference>
<dbReference type="InParanoid" id="Q99KN9"/>
<dbReference type="Reactome" id="R-MMU-432722">
    <property type="pathway name" value="Golgi Associated Vesicle Biogenesis"/>
</dbReference>
<dbReference type="ChiTaRS" id="Clint1">
    <property type="organism name" value="mouse"/>
</dbReference>
<dbReference type="PRO" id="PR:Q99KN9"/>
<dbReference type="Proteomes" id="UP000000589">
    <property type="component" value="Unplaced"/>
</dbReference>
<dbReference type="RNAct" id="Q99KN9">
    <property type="molecule type" value="protein"/>
</dbReference>
<dbReference type="GO" id="GO:0030136">
    <property type="term" value="C:clathrin-coated vesicle"/>
    <property type="evidence" value="ECO:0007669"/>
    <property type="project" value="UniProtKB-SubCell"/>
</dbReference>
<dbReference type="GO" id="GO:0012505">
    <property type="term" value="C:endomembrane system"/>
    <property type="evidence" value="ECO:0007669"/>
    <property type="project" value="UniProtKB-ARBA"/>
</dbReference>
<dbReference type="GO" id="GO:0016020">
    <property type="term" value="C:membrane"/>
    <property type="evidence" value="ECO:0007669"/>
    <property type="project" value="UniProtKB-SubCell"/>
</dbReference>
<dbReference type="GO" id="GO:0048471">
    <property type="term" value="C:perinuclear region of cytoplasm"/>
    <property type="evidence" value="ECO:0007669"/>
    <property type="project" value="UniProtKB-SubCell"/>
</dbReference>
<dbReference type="GO" id="GO:0008289">
    <property type="term" value="F:lipid binding"/>
    <property type="evidence" value="ECO:0007669"/>
    <property type="project" value="UniProtKB-KW"/>
</dbReference>
<dbReference type="GO" id="GO:0006897">
    <property type="term" value="P:endocytosis"/>
    <property type="evidence" value="ECO:0007669"/>
    <property type="project" value="UniProtKB-KW"/>
</dbReference>
<dbReference type="CDD" id="cd16989">
    <property type="entry name" value="ENTH_EpsinR"/>
    <property type="match status" value="1"/>
</dbReference>
<dbReference type="FunFam" id="1.25.40.90:FF:000006">
    <property type="entry name" value="Clathrin interactor 1"/>
    <property type="match status" value="1"/>
</dbReference>
<dbReference type="Gene3D" id="1.25.40.90">
    <property type="match status" value="1"/>
</dbReference>
<dbReference type="InterPro" id="IPR013809">
    <property type="entry name" value="ENTH"/>
</dbReference>
<dbReference type="InterPro" id="IPR008942">
    <property type="entry name" value="ENTH_VHS"/>
</dbReference>
<dbReference type="PANTHER" id="PTHR12276:SF45">
    <property type="entry name" value="CLATHRIN INTERACTOR 1"/>
    <property type="match status" value="1"/>
</dbReference>
<dbReference type="PANTHER" id="PTHR12276">
    <property type="entry name" value="EPSIN/ENT-RELATED"/>
    <property type="match status" value="1"/>
</dbReference>
<dbReference type="Pfam" id="PF01417">
    <property type="entry name" value="ENTH"/>
    <property type="match status" value="1"/>
</dbReference>
<dbReference type="SMART" id="SM00273">
    <property type="entry name" value="ENTH"/>
    <property type="match status" value="1"/>
</dbReference>
<dbReference type="SUPFAM" id="SSF48464">
    <property type="entry name" value="ENTH/VHS domain"/>
    <property type="match status" value="1"/>
</dbReference>
<dbReference type="PROSITE" id="PS50942">
    <property type="entry name" value="ENTH"/>
    <property type="match status" value="1"/>
</dbReference>
<proteinExistence type="evidence at protein level"/>
<name>EPN4_MOUSE</name>
<sequence length="631" mass="68513">MLIFMYLYVCVCTCTCAFSLCSTNVVMNYSEIESKVREATNDDPWGPSGQLMGEIAKATFMYEQFPELMNMLWSRMLKDNKKNWRRVYKSLLLLAYLIRNGSERVVTSAREHIYDLRSLENYHFVDEHGKDQGINIRQKVKELVEFAQDDDRLREERKKAKKNKDKYVGVSSDSVGGFRYNERYDPEPKSKWDEEWDKNKSAFPFSDKLGELSDKIGSTIDDTISKFRRKDREDSPERCSDSDEEKKARRGRSPKGEFKDEEETVTTKHIHITQATETTTTRHKRTANPSKTIDLGAAAHYTGDKASPDQNASTHTPQSSAKPSVPSSKSSGDLVDLFDGSSQSAGGSADLFGGFADFGSAAASGNFPSQATSGNGDFGDWSAFNQAPSGPVASGGELFGSAPQSAVELISASQPALGPPPAASNSADLFDLMGSSQATMTSSQSMNFSLMSTNTVGLGLPMSRSQNTDMVQKSASKTLPSTWSDPSVNISLDNLLPGMQPSKPQQPSLNTMIQQQNMQQPLNVMTQSFGAVNLSSPSNMLPVRPQTNPLLGGPMPMNMPGVMTGTMGMAPLGNSAGMSQGMVGMNMNMGMSASGMGLSGTMGMGMPSMAMPSGTVQPKQDAFANFANFSK</sequence>
<evidence type="ECO:0000250" key="1"/>
<evidence type="ECO:0000250" key="2">
    <source>
        <dbReference type="UniProtKB" id="Q14677"/>
    </source>
</evidence>
<evidence type="ECO:0000255" key="3">
    <source>
        <dbReference type="PROSITE-ProRule" id="PRU00243"/>
    </source>
</evidence>
<evidence type="ECO:0000256" key="4">
    <source>
        <dbReference type="SAM" id="MobiDB-lite"/>
    </source>
</evidence>
<evidence type="ECO:0000303" key="5">
    <source ref="1"/>
</evidence>
<evidence type="ECO:0000305" key="6"/>
<evidence type="ECO:0007744" key="7">
    <source>
    </source>
</evidence>
<evidence type="ECO:0007744" key="8">
    <source>
    </source>
</evidence>
<comment type="function">
    <text evidence="1">Binds to membranes enriched in phosphatidylinositol 4,5-bisphosphate (PtdIns(4,5)P2). May have a role in transport via clathrin-coated vesicles from the trans-Golgi network to endosomes. Stimulates clathrin assembly (By similarity).</text>
</comment>
<comment type="subunit">
    <text evidence="2">Binds clathrin heavy chain and AP-2 (By similarity). Interacts with VTI1B (By similarity). Interacts with GGA2 (via GAE domain) (By similarity). Interacts with AP1G1 (via GAE domain) (By similarity). Interacts with AP1G2 (via GAE domain) (By similarity).</text>
</comment>
<comment type="subcellular location">
    <subcellularLocation>
        <location evidence="1">Cytoplasm</location>
    </subcellularLocation>
    <subcellularLocation>
        <location evidence="1">Cytoplasm</location>
        <location evidence="1">Perinuclear region</location>
    </subcellularLocation>
    <subcellularLocation>
        <location evidence="3">Membrane</location>
        <topology evidence="1">Peripheral membrane protein</topology>
    </subcellularLocation>
    <subcellularLocation>
        <location evidence="1">Cytoplasmic vesicle</location>
        <location evidence="1">Clathrin-coated vesicle</location>
    </subcellularLocation>
    <text evidence="1">Found throughout the cell, with the exception of the cell surface. Concentrated in the perinuclear region and associated with clathrin-coated vesicles close to the trans-Golgi network (By similarity).</text>
</comment>
<comment type="alternative products">
    <event type="alternative splicing"/>
    <isoform>
        <id>Q99KN9-1</id>
        <name>1</name>
        <sequence type="displayed"/>
    </isoform>
    <isoform>
        <id>Q99KN9-2</id>
        <name>2</name>
        <sequence type="described" ref="VSP_009162 VSP_009163 VSP_009164"/>
    </isoform>
</comment>
<comment type="similarity">
    <text evidence="6">Belongs to the epsin family.</text>
</comment>
<comment type="sequence caution" evidence="6">
    <conflict type="erroneous initiation">
        <sequence resource="EMBL-CDS" id="BAC41396"/>
    </conflict>
</comment>
<gene>
    <name type="primary">Clint1</name>
    <name type="synonym">Enth</name>
    <name type="synonym">Epn4</name>
    <name type="synonym">Epnr</name>
    <name type="synonym">Kiaa0171</name>
</gene>
<keyword id="KW-0025">Alternative splicing</keyword>
<keyword id="KW-0963">Cytoplasm</keyword>
<keyword id="KW-0968">Cytoplasmic vesicle</keyword>
<keyword id="KW-0254">Endocytosis</keyword>
<keyword id="KW-0446">Lipid-binding</keyword>
<keyword id="KW-0472">Membrane</keyword>
<keyword id="KW-0597">Phosphoprotein</keyword>
<keyword id="KW-1185">Reference proteome</keyword>
<feature type="chain" id="PRO_0000074522" description="Clathrin interactor 1">
    <location>
        <begin position="1"/>
        <end position="631"/>
    </location>
</feature>
<feature type="domain" description="ENTH" evidence="3">
    <location>
        <begin position="24"/>
        <end position="157"/>
    </location>
</feature>
<feature type="region of interest" description="Interaction with VTI1B" evidence="2">
    <location>
        <begin position="60"/>
        <end position="62"/>
    </location>
</feature>
<feature type="region of interest" description="Interaction with VTI1B" evidence="2">
    <location>
        <begin position="102"/>
        <end position="104"/>
    </location>
</feature>
<feature type="region of interest" description="Interaction with VTI1B" evidence="2">
    <location>
        <begin position="150"/>
        <end position="161"/>
    </location>
</feature>
<feature type="region of interest" description="Disordered" evidence="4">
    <location>
        <begin position="227"/>
        <end position="339"/>
    </location>
</feature>
<feature type="compositionally biased region" description="Basic and acidic residues" evidence="4">
    <location>
        <begin position="230"/>
        <end position="247"/>
    </location>
</feature>
<feature type="compositionally biased region" description="Polar residues" evidence="4">
    <location>
        <begin position="308"/>
        <end position="318"/>
    </location>
</feature>
<feature type="compositionally biased region" description="Low complexity" evidence="4">
    <location>
        <begin position="319"/>
        <end position="331"/>
    </location>
</feature>
<feature type="binding site" evidence="1">
    <location>
        <position position="37"/>
    </location>
    <ligand>
        <name>a 1,2-diacyl-sn-glycero-3-phospho-(1D-myo-inositol-4,5-bisphosphate)</name>
        <dbReference type="ChEBI" id="CHEBI:58456"/>
    </ligand>
</feature>
<feature type="binding site" evidence="1">
    <location>
        <position position="75"/>
    </location>
    <ligand>
        <name>a 1,2-diacyl-sn-glycero-3-phospho-(1D-myo-inositol-4,5-bisphosphate)</name>
        <dbReference type="ChEBI" id="CHEBI:58456"/>
    </ligand>
</feature>
<feature type="modified residue" description="Phosphoserine" evidence="7">
    <location>
        <position position="171"/>
    </location>
</feature>
<feature type="modified residue" description="Phosphoserine" evidence="2">
    <location>
        <position position="174"/>
    </location>
</feature>
<feature type="modified residue" description="Phosphoserine" evidence="8">
    <location>
        <position position="213"/>
    </location>
</feature>
<feature type="modified residue" description="Phosphoserine" evidence="2">
    <location>
        <position position="218"/>
    </location>
</feature>
<feature type="modified residue" description="Phosphoserine" evidence="2">
    <location>
        <position position="235"/>
    </location>
</feature>
<feature type="modified residue" description="Phosphoserine" evidence="2">
    <location>
        <position position="253"/>
    </location>
</feature>
<feature type="modified residue" description="Phosphoserine" evidence="2">
    <location>
        <position position="307"/>
    </location>
</feature>
<feature type="modified residue" description="Phosphothreonine" evidence="2">
    <location>
        <position position="316"/>
    </location>
</feature>
<feature type="modified residue" description="Phosphoserine" evidence="2">
    <location>
        <position position="320"/>
    </location>
</feature>
<feature type="modified residue" description="Phosphoserine" evidence="2">
    <location>
        <position position="630"/>
    </location>
</feature>
<feature type="splice variant" id="VSP_009162" description="In isoform 2." evidence="5">
    <location>
        <begin position="346"/>
        <end position="370"/>
    </location>
</feature>
<feature type="splice variant" id="VSP_009163" description="In isoform 2." evidence="5">
    <original>NTDMVQKSASKTLPSTWSDPSVN</original>
    <variation>VSCLFPLGIGAYTSTRRSNSMMS</variation>
    <location>
        <begin position="467"/>
        <end position="489"/>
    </location>
</feature>
<feature type="splice variant" id="VSP_009164" description="In isoform 2." evidence="5">
    <location>
        <begin position="490"/>
        <end position="631"/>
    </location>
</feature>
<reference key="1">
    <citation type="submission" date="2002-10" db="EMBL/GenBank/DDBJ databases">
        <title>Prediction of the coding sequences of mouse homologues of KIAA gene: I. The complete nucleotide sequences of 100 mouse KIAA-homologous cDNAs identified by screening of terminal sequences of cDNA clones randomly sampled from size-fractionated libraries.</title>
        <authorList>
            <person name="Okazaki N."/>
            <person name="Kikuno R."/>
            <person name="Ohara R."/>
            <person name="Inamoto S."/>
            <person name="Hara Y."/>
            <person name="Nagase T."/>
            <person name="Ohara O."/>
            <person name="Koga H."/>
        </authorList>
    </citation>
    <scope>NUCLEOTIDE SEQUENCE [MRNA] (ISOFORM 2)</scope>
    <source>
        <tissue>Embryonic intestine</tissue>
    </source>
</reference>
<reference key="2">
    <citation type="journal article" date="2004" name="Genome Res.">
        <title>The status, quality, and expansion of the NIH full-length cDNA project: the Mammalian Gene Collection (MGC).</title>
        <authorList>
            <consortium name="The MGC Project Team"/>
        </authorList>
    </citation>
    <scope>NUCLEOTIDE SEQUENCE [LARGE SCALE MRNA] OF 101-631 (ISOFORM 1)</scope>
    <source>
        <tissue>Mammary tumor</tissue>
    </source>
</reference>
<reference key="3">
    <citation type="journal article" date="2007" name="Proc. Natl. Acad. Sci. U.S.A.">
        <title>Large-scale phosphorylation analysis of mouse liver.</title>
        <authorList>
            <person name="Villen J."/>
            <person name="Beausoleil S.A."/>
            <person name="Gerber S.A."/>
            <person name="Gygi S.P."/>
        </authorList>
    </citation>
    <scope>PHOSPHORYLATION [LARGE SCALE ANALYSIS] AT SER-171</scope>
    <scope>IDENTIFICATION BY MASS SPECTROMETRY [LARGE SCALE ANALYSIS]</scope>
    <source>
        <tissue>Liver</tissue>
    </source>
</reference>
<reference key="4">
    <citation type="journal article" date="2010" name="Cell">
        <title>A tissue-specific atlas of mouse protein phosphorylation and expression.</title>
        <authorList>
            <person name="Huttlin E.L."/>
            <person name="Jedrychowski M.P."/>
            <person name="Elias J.E."/>
            <person name="Goswami T."/>
            <person name="Rad R."/>
            <person name="Beausoleil S.A."/>
            <person name="Villen J."/>
            <person name="Haas W."/>
            <person name="Sowa M.E."/>
            <person name="Gygi S.P."/>
        </authorList>
    </citation>
    <scope>PHOSPHORYLATION [LARGE SCALE ANALYSIS] AT SER-213</scope>
    <scope>IDENTIFICATION BY MASS SPECTROMETRY [LARGE SCALE ANALYSIS]</scope>
    <source>
        <tissue>Brain</tissue>
        <tissue>Brown adipose tissue</tissue>
        <tissue>Heart</tissue>
        <tissue>Kidney</tissue>
        <tissue>Liver</tissue>
        <tissue>Lung</tissue>
        <tissue>Pancreas</tissue>
        <tissue>Spleen</tissue>
        <tissue>Testis</tissue>
    </source>
</reference>